<keyword id="KW-0150">Chloroplast</keyword>
<keyword id="KW-0472">Membrane</keyword>
<keyword id="KW-0602">Photosynthesis</keyword>
<keyword id="KW-0604">Photosystem II</keyword>
<keyword id="KW-0934">Plastid</keyword>
<keyword id="KW-0674">Reaction center</keyword>
<keyword id="KW-0793">Thylakoid</keyword>
<keyword id="KW-0812">Transmembrane</keyword>
<keyword id="KW-1133">Transmembrane helix</keyword>
<protein>
    <recommendedName>
        <fullName evidence="1">Photosystem II reaction center protein J</fullName>
        <shortName evidence="1">PSII-J</shortName>
    </recommendedName>
</protein>
<sequence length="40" mass="4101">MADTTGRIPLWVIGTVAGIPVIGLIGIFFYGSYSGLGSSL</sequence>
<proteinExistence type="inferred from homology"/>
<dbReference type="EMBL" id="AP009376">
    <property type="protein sequence ID" value="BAF50652.1"/>
    <property type="molecule type" value="Genomic_DNA"/>
</dbReference>
<dbReference type="RefSeq" id="YP_001123828.1">
    <property type="nucleotide sequence ID" value="NC_009275.1"/>
</dbReference>
<dbReference type="SMR" id="A4QLU7"/>
<dbReference type="GeneID" id="4962214"/>
<dbReference type="GO" id="GO:0009535">
    <property type="term" value="C:chloroplast thylakoid membrane"/>
    <property type="evidence" value="ECO:0007669"/>
    <property type="project" value="UniProtKB-SubCell"/>
</dbReference>
<dbReference type="GO" id="GO:0009539">
    <property type="term" value="C:photosystem II reaction center"/>
    <property type="evidence" value="ECO:0007669"/>
    <property type="project" value="InterPro"/>
</dbReference>
<dbReference type="GO" id="GO:0015979">
    <property type="term" value="P:photosynthesis"/>
    <property type="evidence" value="ECO:0007669"/>
    <property type="project" value="UniProtKB-UniRule"/>
</dbReference>
<dbReference type="Gene3D" id="6.10.250.2070">
    <property type="match status" value="1"/>
</dbReference>
<dbReference type="HAMAP" id="MF_01305">
    <property type="entry name" value="PSII_PsbJ"/>
    <property type="match status" value="1"/>
</dbReference>
<dbReference type="InterPro" id="IPR002682">
    <property type="entry name" value="PSII_PsbJ"/>
</dbReference>
<dbReference type="InterPro" id="IPR037267">
    <property type="entry name" value="PSII_PsbJ_sf"/>
</dbReference>
<dbReference type="NCBIfam" id="NF002722">
    <property type="entry name" value="PRK02565.1"/>
    <property type="match status" value="1"/>
</dbReference>
<dbReference type="PANTHER" id="PTHR34812">
    <property type="entry name" value="PHOTOSYSTEM II REACTION CENTER PROTEIN J"/>
    <property type="match status" value="1"/>
</dbReference>
<dbReference type="PANTHER" id="PTHR34812:SF3">
    <property type="entry name" value="PHOTOSYSTEM II REACTION CENTER PROTEIN J"/>
    <property type="match status" value="1"/>
</dbReference>
<dbReference type="Pfam" id="PF01788">
    <property type="entry name" value="PsbJ"/>
    <property type="match status" value="1"/>
</dbReference>
<dbReference type="SUPFAM" id="SSF161021">
    <property type="entry name" value="Photosystem II reaction center protein J, PsbJ"/>
    <property type="match status" value="1"/>
</dbReference>
<feature type="chain" id="PRO_0000292256" description="Photosystem II reaction center protein J">
    <location>
        <begin position="1"/>
        <end position="40"/>
    </location>
</feature>
<feature type="transmembrane region" description="Helical" evidence="1">
    <location>
        <begin position="8"/>
        <end position="28"/>
    </location>
</feature>
<evidence type="ECO:0000255" key="1">
    <source>
        <dbReference type="HAMAP-Rule" id="MF_01305"/>
    </source>
</evidence>
<reference key="1">
    <citation type="submission" date="2007-03" db="EMBL/GenBank/DDBJ databases">
        <title>Sequencing analysis of Nasturtium officinale chloroplast DNA.</title>
        <authorList>
            <person name="Hosouchi T."/>
            <person name="Tsuruoka H."/>
            <person name="Kotani H."/>
        </authorList>
    </citation>
    <scope>NUCLEOTIDE SEQUENCE [LARGE SCALE GENOMIC DNA]</scope>
</reference>
<name>PSBJ_NASOF</name>
<gene>
    <name evidence="1" type="primary">psbJ</name>
</gene>
<comment type="function">
    <text evidence="1">One of the components of the core complex of photosystem II (PSII). PSII is a light-driven water:plastoquinone oxidoreductase that uses light energy to abstract electrons from H(2)O, generating O(2) and a proton gradient subsequently used for ATP formation. It consists of a core antenna complex that captures photons, and an electron transfer chain that converts photonic excitation into a charge separation.</text>
</comment>
<comment type="subunit">
    <text evidence="1">PSII is composed of 1 copy each of membrane proteins PsbA, PsbB, PsbC, PsbD, PsbE, PsbF, PsbH, PsbI, PsbJ, PsbK, PsbL, PsbM, PsbT, PsbX, PsbY, PsbZ, Psb30/Ycf12, at least 3 peripheral proteins of the oxygen-evolving complex and a large number of cofactors. It forms dimeric complexes.</text>
</comment>
<comment type="subcellular location">
    <subcellularLocation>
        <location evidence="1">Plastid</location>
        <location evidence="1">Chloroplast thylakoid membrane</location>
        <topology evidence="1">Single-pass membrane protein</topology>
    </subcellularLocation>
</comment>
<comment type="similarity">
    <text evidence="1">Belongs to the PsbJ family.</text>
</comment>
<accession>A4QLU7</accession>
<organism>
    <name type="scientific">Nasturtium officinale</name>
    <name type="common">Watercress</name>
    <name type="synonym">Rorippa nasturtium-aquaticum</name>
    <dbReference type="NCBI Taxonomy" id="65948"/>
    <lineage>
        <taxon>Eukaryota</taxon>
        <taxon>Viridiplantae</taxon>
        <taxon>Streptophyta</taxon>
        <taxon>Embryophyta</taxon>
        <taxon>Tracheophyta</taxon>
        <taxon>Spermatophyta</taxon>
        <taxon>Magnoliopsida</taxon>
        <taxon>eudicotyledons</taxon>
        <taxon>Gunneridae</taxon>
        <taxon>Pentapetalae</taxon>
        <taxon>rosids</taxon>
        <taxon>malvids</taxon>
        <taxon>Brassicales</taxon>
        <taxon>Brassicaceae</taxon>
        <taxon>Cardamineae</taxon>
        <taxon>Nasturtium</taxon>
    </lineage>
</organism>
<geneLocation type="chloroplast"/>